<feature type="chain" id="PRO_0000362033" description="Probable inactive serine/threonine-protein kinase samkD">
    <location>
        <begin position="1"/>
        <end position="553"/>
    </location>
</feature>
<feature type="domain" description="SAM" evidence="2">
    <location>
        <begin position="24"/>
        <end position="90"/>
    </location>
</feature>
<feature type="domain" description="Protein kinase" evidence="1">
    <location>
        <begin position="134"/>
        <end position="393"/>
    </location>
</feature>
<feature type="binding site" evidence="1">
    <location>
        <begin position="140"/>
        <end position="148"/>
    </location>
    <ligand>
        <name>ATP</name>
        <dbReference type="ChEBI" id="CHEBI:30616"/>
    </ligand>
</feature>
<feature type="binding site" evidence="1">
    <location>
        <position position="165"/>
    </location>
    <ligand>
        <name>ATP</name>
        <dbReference type="ChEBI" id="CHEBI:30616"/>
    </ligand>
</feature>
<dbReference type="EMBL" id="AAFI02000005">
    <property type="protein sequence ID" value="EAL72690.1"/>
    <property type="molecule type" value="Genomic_DNA"/>
</dbReference>
<dbReference type="RefSeq" id="XP_646370.1">
    <property type="nucleotide sequence ID" value="XM_641278.1"/>
</dbReference>
<dbReference type="SMR" id="Q55CW1"/>
<dbReference type="FunCoup" id="Q55CW1">
    <property type="interactions" value="1"/>
</dbReference>
<dbReference type="PaxDb" id="44689-DDB0229404"/>
<dbReference type="EnsemblProtists" id="EAL72690">
    <property type="protein sequence ID" value="EAL72690"/>
    <property type="gene ID" value="DDB_G0270680"/>
</dbReference>
<dbReference type="GeneID" id="8617325"/>
<dbReference type="KEGG" id="ddi:DDB_G0270680"/>
<dbReference type="dictyBase" id="DDB_G0270680">
    <property type="gene designation" value="samkD"/>
</dbReference>
<dbReference type="VEuPathDB" id="AmoebaDB:DDB_G0270680"/>
<dbReference type="HOGENOM" id="CLU_492983_0_0_1"/>
<dbReference type="InParanoid" id="Q55CW1"/>
<dbReference type="OMA" id="YTEEWSK"/>
<dbReference type="PhylomeDB" id="Q55CW1"/>
<dbReference type="PRO" id="PR:Q55CW1"/>
<dbReference type="Proteomes" id="UP000002195">
    <property type="component" value="Chromosome 1"/>
</dbReference>
<dbReference type="GO" id="GO:0005524">
    <property type="term" value="F:ATP binding"/>
    <property type="evidence" value="ECO:0007669"/>
    <property type="project" value="UniProtKB-KW"/>
</dbReference>
<dbReference type="GO" id="GO:0004674">
    <property type="term" value="F:protein serine/threonine kinase activity"/>
    <property type="evidence" value="ECO:0000318"/>
    <property type="project" value="GO_Central"/>
</dbReference>
<dbReference type="GO" id="GO:0007165">
    <property type="term" value="P:signal transduction"/>
    <property type="evidence" value="ECO:0000318"/>
    <property type="project" value="GO_Central"/>
</dbReference>
<dbReference type="CDD" id="cd00180">
    <property type="entry name" value="PKc"/>
    <property type="match status" value="1"/>
</dbReference>
<dbReference type="Gene3D" id="1.10.150.50">
    <property type="entry name" value="Transcription Factor, Ets-1"/>
    <property type="match status" value="1"/>
</dbReference>
<dbReference type="Gene3D" id="1.10.510.10">
    <property type="entry name" value="Transferase(Phosphotransferase) domain 1"/>
    <property type="match status" value="1"/>
</dbReference>
<dbReference type="InterPro" id="IPR011009">
    <property type="entry name" value="Kinase-like_dom_sf"/>
</dbReference>
<dbReference type="InterPro" id="IPR051931">
    <property type="entry name" value="PAK3-like"/>
</dbReference>
<dbReference type="InterPro" id="IPR000719">
    <property type="entry name" value="Prot_kinase_dom"/>
</dbReference>
<dbReference type="InterPro" id="IPR001660">
    <property type="entry name" value="SAM"/>
</dbReference>
<dbReference type="InterPro" id="IPR013761">
    <property type="entry name" value="SAM/pointed_sf"/>
</dbReference>
<dbReference type="PANTHER" id="PTHR45832">
    <property type="entry name" value="SERINE/THREONINE-PROTEIN KINASE SAMKA-RELATED-RELATED"/>
    <property type="match status" value="1"/>
</dbReference>
<dbReference type="PANTHER" id="PTHR45832:SF22">
    <property type="entry name" value="SERINE_THREONINE-PROTEIN KINASE SAMKA-RELATED"/>
    <property type="match status" value="1"/>
</dbReference>
<dbReference type="Pfam" id="PF00069">
    <property type="entry name" value="Pkinase"/>
    <property type="match status" value="1"/>
</dbReference>
<dbReference type="SUPFAM" id="SSF56112">
    <property type="entry name" value="Protein kinase-like (PK-like)"/>
    <property type="match status" value="1"/>
</dbReference>
<dbReference type="SUPFAM" id="SSF47769">
    <property type="entry name" value="SAM/Pointed domain"/>
    <property type="match status" value="1"/>
</dbReference>
<dbReference type="PROSITE" id="PS50011">
    <property type="entry name" value="PROTEIN_KINASE_DOM"/>
    <property type="match status" value="1"/>
</dbReference>
<dbReference type="PROSITE" id="PS50105">
    <property type="entry name" value="SAM_DOMAIN"/>
    <property type="match status" value="1"/>
</dbReference>
<reference key="1">
    <citation type="journal article" date="2005" name="Nature">
        <title>The genome of the social amoeba Dictyostelium discoideum.</title>
        <authorList>
            <person name="Eichinger L."/>
            <person name="Pachebat J.A."/>
            <person name="Gloeckner G."/>
            <person name="Rajandream M.A."/>
            <person name="Sucgang R."/>
            <person name="Berriman M."/>
            <person name="Song J."/>
            <person name="Olsen R."/>
            <person name="Szafranski K."/>
            <person name="Xu Q."/>
            <person name="Tunggal B."/>
            <person name="Kummerfeld S."/>
            <person name="Madera M."/>
            <person name="Konfortov B.A."/>
            <person name="Rivero F."/>
            <person name="Bankier A.T."/>
            <person name="Lehmann R."/>
            <person name="Hamlin N."/>
            <person name="Davies R."/>
            <person name="Gaudet P."/>
            <person name="Fey P."/>
            <person name="Pilcher K."/>
            <person name="Chen G."/>
            <person name="Saunders D."/>
            <person name="Sodergren E.J."/>
            <person name="Davis P."/>
            <person name="Kerhornou A."/>
            <person name="Nie X."/>
            <person name="Hall N."/>
            <person name="Anjard C."/>
            <person name="Hemphill L."/>
            <person name="Bason N."/>
            <person name="Farbrother P."/>
            <person name="Desany B."/>
            <person name="Just E."/>
            <person name="Morio T."/>
            <person name="Rost R."/>
            <person name="Churcher C.M."/>
            <person name="Cooper J."/>
            <person name="Haydock S."/>
            <person name="van Driessche N."/>
            <person name="Cronin A."/>
            <person name="Goodhead I."/>
            <person name="Muzny D.M."/>
            <person name="Mourier T."/>
            <person name="Pain A."/>
            <person name="Lu M."/>
            <person name="Harper D."/>
            <person name="Lindsay R."/>
            <person name="Hauser H."/>
            <person name="James K.D."/>
            <person name="Quiles M."/>
            <person name="Madan Babu M."/>
            <person name="Saito T."/>
            <person name="Buchrieser C."/>
            <person name="Wardroper A."/>
            <person name="Felder M."/>
            <person name="Thangavelu M."/>
            <person name="Johnson D."/>
            <person name="Knights A."/>
            <person name="Loulseged H."/>
            <person name="Mungall K.L."/>
            <person name="Oliver K."/>
            <person name="Price C."/>
            <person name="Quail M.A."/>
            <person name="Urushihara H."/>
            <person name="Hernandez J."/>
            <person name="Rabbinowitsch E."/>
            <person name="Steffen D."/>
            <person name="Sanders M."/>
            <person name="Ma J."/>
            <person name="Kohara Y."/>
            <person name="Sharp S."/>
            <person name="Simmonds M.N."/>
            <person name="Spiegler S."/>
            <person name="Tivey A."/>
            <person name="Sugano S."/>
            <person name="White B."/>
            <person name="Walker D."/>
            <person name="Woodward J.R."/>
            <person name="Winckler T."/>
            <person name="Tanaka Y."/>
            <person name="Shaulsky G."/>
            <person name="Schleicher M."/>
            <person name="Weinstock G.M."/>
            <person name="Rosenthal A."/>
            <person name="Cox E.C."/>
            <person name="Chisholm R.L."/>
            <person name="Gibbs R.A."/>
            <person name="Loomis W.F."/>
            <person name="Platzer M."/>
            <person name="Kay R.R."/>
            <person name="Williams J.G."/>
            <person name="Dear P.H."/>
            <person name="Noegel A.A."/>
            <person name="Barrell B.G."/>
            <person name="Kuspa A."/>
        </authorList>
    </citation>
    <scope>NUCLEOTIDE SEQUENCE [LARGE SCALE GENOMIC DNA]</scope>
    <source>
        <strain>AX4</strain>
    </source>
</reference>
<proteinExistence type="inferred from homology"/>
<gene>
    <name type="primary">samkD</name>
    <name type="synonym">SAMK-D</name>
    <name type="synonym">smkD</name>
    <name type="ORF">DDB_G0270680</name>
</gene>
<keyword id="KW-0067">ATP-binding</keyword>
<keyword id="KW-0547">Nucleotide-binding</keyword>
<keyword id="KW-1185">Reference proteome</keyword>
<comment type="domain">
    <text>The protein kinase domain is predicted to be catalytically inactive.</text>
</comment>
<comment type="similarity">
    <text evidence="1">Belongs to the protein kinase superfamily. Ser/Thr protein kinase family.</text>
</comment>
<name>SAMKD_DICDI</name>
<organism>
    <name type="scientific">Dictyostelium discoideum</name>
    <name type="common">Social amoeba</name>
    <dbReference type="NCBI Taxonomy" id="44689"/>
    <lineage>
        <taxon>Eukaryota</taxon>
        <taxon>Amoebozoa</taxon>
        <taxon>Evosea</taxon>
        <taxon>Eumycetozoa</taxon>
        <taxon>Dictyostelia</taxon>
        <taxon>Dictyosteliales</taxon>
        <taxon>Dictyosteliaceae</taxon>
        <taxon>Dictyostelium</taxon>
    </lineage>
</organism>
<protein>
    <recommendedName>
        <fullName>Probable inactive serine/threonine-protein kinase samkD</fullName>
    </recommendedName>
    <alternativeName>
        <fullName>SAM domain-containing protein kinase D</fullName>
    </alternativeName>
</protein>
<accession>Q55CW1</accession>
<evidence type="ECO:0000255" key="1">
    <source>
        <dbReference type="PROSITE-ProRule" id="PRU00159"/>
    </source>
</evidence>
<evidence type="ECO:0000255" key="2">
    <source>
        <dbReference type="PROSITE-ProRule" id="PRU00184"/>
    </source>
</evidence>
<sequence>MEKSIESISSSTLNILDNKNYKKWDNETVCKWLLNNIKTIQKVSIEIFQANEIIGKDLEFLTDKILLKMGVGIRDILNFKFEYQILKNCYNNNNNNNHITINNFNYNFNNFKININKDLLKVVVNAPIININEYQYIETISKNKFCEIEKYKKSQTKVNEYIIIKKIIKNSTLNEEKLINEIDTIYLLDHPNLIKIIGYCKDKNYFYIGMKYYETFKFKQSNISKFGKNFEQVIRKISFKILSAIDYLHSLEPPIIHGNINAKNILLDNENNEPILIDFGLSYKSIDLLTNQKTQFISPCFITPEYFYKKTKNKISKEADIFSFGSTISNMIKGGTDFKEDEEGFEELKRTFAGVLTSRDKVSFDYRSLFTEINKDEPCFRPSSKELLKSFWFVEPPQPSFKTSEITTNLLIYYLKKYGCYIIRDGVAMVSLNFNENIYSTSSIIGSEFSHQPKINEKHKYFKEINQFYSKILSESFQAKIGWYLLNLNNEFKDKPYFKNIFLSFSTSDKLEINSVADLNLKLTIFFYNSITMSLIYQTIYQKPKSFKIVDYL</sequence>